<protein>
    <recommendedName>
        <fullName evidence="1">Probable Fe(2+)-trafficking protein</fullName>
    </recommendedName>
</protein>
<dbReference type="EMBL" id="CP000546">
    <property type="protein sequence ID" value="ABN02014.1"/>
    <property type="molecule type" value="Genomic_DNA"/>
</dbReference>
<dbReference type="RefSeq" id="WP_004193961.1">
    <property type="nucleotide sequence ID" value="NC_008836.1"/>
</dbReference>
<dbReference type="BMRB" id="A2SAN1"/>
<dbReference type="SMR" id="A2SAN1"/>
<dbReference type="KEGG" id="bml:BMA10229_A3058"/>
<dbReference type="HOGENOM" id="CLU_170994_0_0_4"/>
<dbReference type="Proteomes" id="UP000002283">
    <property type="component" value="Chromosome I"/>
</dbReference>
<dbReference type="GO" id="GO:0005829">
    <property type="term" value="C:cytosol"/>
    <property type="evidence" value="ECO:0007669"/>
    <property type="project" value="TreeGrafter"/>
</dbReference>
<dbReference type="GO" id="GO:0005506">
    <property type="term" value="F:iron ion binding"/>
    <property type="evidence" value="ECO:0007669"/>
    <property type="project" value="UniProtKB-UniRule"/>
</dbReference>
<dbReference type="GO" id="GO:0034599">
    <property type="term" value="P:cellular response to oxidative stress"/>
    <property type="evidence" value="ECO:0007669"/>
    <property type="project" value="TreeGrafter"/>
</dbReference>
<dbReference type="FunFam" id="1.10.3880.10:FF:000001">
    <property type="entry name" value="Probable Fe(2+)-trafficking protein"/>
    <property type="match status" value="1"/>
</dbReference>
<dbReference type="Gene3D" id="1.10.3880.10">
    <property type="entry name" value="Fe(II) trafficking protein YggX"/>
    <property type="match status" value="1"/>
</dbReference>
<dbReference type="HAMAP" id="MF_00686">
    <property type="entry name" value="Fe_traffic_YggX"/>
    <property type="match status" value="1"/>
</dbReference>
<dbReference type="InterPro" id="IPR007457">
    <property type="entry name" value="Fe_traffick_prot_YggX"/>
</dbReference>
<dbReference type="InterPro" id="IPR036766">
    <property type="entry name" value="Fe_traffick_prot_YggX_sf"/>
</dbReference>
<dbReference type="NCBIfam" id="NF003817">
    <property type="entry name" value="PRK05408.1"/>
    <property type="match status" value="1"/>
</dbReference>
<dbReference type="PANTHER" id="PTHR36965">
    <property type="entry name" value="FE(2+)-TRAFFICKING PROTEIN-RELATED"/>
    <property type="match status" value="1"/>
</dbReference>
<dbReference type="PANTHER" id="PTHR36965:SF1">
    <property type="entry name" value="FE(2+)-TRAFFICKING PROTEIN-RELATED"/>
    <property type="match status" value="1"/>
</dbReference>
<dbReference type="Pfam" id="PF04362">
    <property type="entry name" value="Iron_traffic"/>
    <property type="match status" value="1"/>
</dbReference>
<dbReference type="PIRSF" id="PIRSF029827">
    <property type="entry name" value="Fe_traffic_YggX"/>
    <property type="match status" value="1"/>
</dbReference>
<dbReference type="SUPFAM" id="SSF111148">
    <property type="entry name" value="YggX-like"/>
    <property type="match status" value="1"/>
</dbReference>
<proteinExistence type="inferred from homology"/>
<reference key="1">
    <citation type="journal article" date="2010" name="Genome Biol. Evol.">
        <title>Continuing evolution of Burkholderia mallei through genome reduction and large-scale rearrangements.</title>
        <authorList>
            <person name="Losada L."/>
            <person name="Ronning C.M."/>
            <person name="DeShazer D."/>
            <person name="Woods D."/>
            <person name="Fedorova N."/>
            <person name="Kim H.S."/>
            <person name="Shabalina S.A."/>
            <person name="Pearson T.R."/>
            <person name="Brinkac L."/>
            <person name="Tan P."/>
            <person name="Nandi T."/>
            <person name="Crabtree J."/>
            <person name="Badger J."/>
            <person name="Beckstrom-Sternberg S."/>
            <person name="Saqib M."/>
            <person name="Schutzer S.E."/>
            <person name="Keim P."/>
            <person name="Nierman W.C."/>
        </authorList>
    </citation>
    <scope>NUCLEOTIDE SEQUENCE [LARGE SCALE GENOMIC DNA]</scope>
    <source>
        <strain>NCTC 10229</strain>
    </source>
</reference>
<comment type="function">
    <text evidence="1">Could be a mediator in iron transactions between iron acquisition and iron-requiring processes, such as synthesis and/or repair of Fe-S clusters in biosynthetic enzymes.</text>
</comment>
<comment type="similarity">
    <text evidence="1">Belongs to the Fe(2+)-trafficking protein family.</text>
</comment>
<keyword id="KW-0408">Iron</keyword>
<evidence type="ECO:0000255" key="1">
    <source>
        <dbReference type="HAMAP-Rule" id="MF_00686"/>
    </source>
</evidence>
<sequence>MARMIHCAKLGKEAEGLDFPPLPGELGKRLYESVSKQAWQDWLKQQTMLINENRLNMADPRARQYLMKQTEKYFFGEGADQASGYVPPAQG</sequence>
<organism>
    <name type="scientific">Burkholderia mallei (strain NCTC 10229)</name>
    <dbReference type="NCBI Taxonomy" id="412022"/>
    <lineage>
        <taxon>Bacteria</taxon>
        <taxon>Pseudomonadati</taxon>
        <taxon>Pseudomonadota</taxon>
        <taxon>Betaproteobacteria</taxon>
        <taxon>Burkholderiales</taxon>
        <taxon>Burkholderiaceae</taxon>
        <taxon>Burkholderia</taxon>
        <taxon>pseudomallei group</taxon>
    </lineage>
</organism>
<gene>
    <name type="ordered locus">BMA10229_A3058</name>
</gene>
<accession>A2SAN1</accession>
<feature type="chain" id="PRO_1000045023" description="Probable Fe(2+)-trafficking protein">
    <location>
        <begin position="1"/>
        <end position="91"/>
    </location>
</feature>
<name>FETP_BURM9</name>